<feature type="chain" id="PRO_0000286551" description="Heme-binding protein 1">
    <location>
        <begin position="1"/>
        <end position="190"/>
    </location>
</feature>
<keyword id="KW-0963">Cytoplasm</keyword>
<keyword id="KW-1185">Reference proteome</keyword>
<reference key="1">
    <citation type="submission" date="2004-06" db="EMBL/GenBank/DDBJ databases">
        <authorList>
            <consortium name="NIH - Xenopus Gene Collection (XGC) project"/>
        </authorList>
    </citation>
    <scope>NUCLEOTIDE SEQUENCE [LARGE SCALE MRNA]</scope>
</reference>
<accession>Q6DJ66</accession>
<proteinExistence type="evidence at transcript level"/>
<dbReference type="EMBL" id="BC075317">
    <property type="protein sequence ID" value="AAH75317.1"/>
    <property type="molecule type" value="mRNA"/>
</dbReference>
<dbReference type="RefSeq" id="NP_001004901.1">
    <property type="nucleotide sequence ID" value="NM_001004901.1"/>
</dbReference>
<dbReference type="SMR" id="Q6DJ66"/>
<dbReference type="FunCoup" id="Q6DJ66">
    <property type="interactions" value="81"/>
</dbReference>
<dbReference type="STRING" id="8364.ENSXETP00000023397"/>
<dbReference type="PaxDb" id="8364-ENSXETP00000057031"/>
<dbReference type="DNASU" id="448253"/>
<dbReference type="GeneID" id="448253"/>
<dbReference type="KEGG" id="xtr:448253"/>
<dbReference type="AGR" id="Xenbase:XB-GENE-1002291"/>
<dbReference type="CTD" id="50865"/>
<dbReference type="Xenbase" id="XB-GENE-1002291">
    <property type="gene designation" value="hebp1"/>
</dbReference>
<dbReference type="eggNOG" id="ENOG502RYZW">
    <property type="taxonomic scope" value="Eukaryota"/>
</dbReference>
<dbReference type="HOGENOM" id="CLU_068699_3_0_1"/>
<dbReference type="InParanoid" id="Q6DJ66"/>
<dbReference type="OMA" id="AYEERTY"/>
<dbReference type="OrthoDB" id="9980274at2759"/>
<dbReference type="PhylomeDB" id="Q6DJ66"/>
<dbReference type="TreeFam" id="TF328887"/>
<dbReference type="Reactome" id="R-XTR-418594">
    <property type="pathway name" value="G alpha (i) signalling events"/>
</dbReference>
<dbReference type="Reactome" id="R-XTR-444473">
    <property type="pathway name" value="Formyl peptide receptors bind formyl peptides and many other ligands"/>
</dbReference>
<dbReference type="Proteomes" id="UP000008143">
    <property type="component" value="Chromosome 4"/>
</dbReference>
<dbReference type="Bgee" id="ENSXETG00000027311">
    <property type="expression patterns" value="Expressed in liver and 13 other cell types or tissues"/>
</dbReference>
<dbReference type="GO" id="GO:0005737">
    <property type="term" value="C:cytoplasm"/>
    <property type="evidence" value="ECO:0007669"/>
    <property type="project" value="UniProtKB-SubCell"/>
</dbReference>
<dbReference type="GO" id="GO:0020037">
    <property type="term" value="F:heme binding"/>
    <property type="evidence" value="ECO:0000250"/>
    <property type="project" value="UniProtKB"/>
</dbReference>
<dbReference type="FunFam" id="3.20.80.10:FF:000003">
    <property type="entry name" value="Heme-binding protein 1"/>
    <property type="match status" value="1"/>
</dbReference>
<dbReference type="Gene3D" id="3.20.80.10">
    <property type="entry name" value="Regulatory factor, effector binding domain"/>
    <property type="match status" value="1"/>
</dbReference>
<dbReference type="InterPro" id="IPR011256">
    <property type="entry name" value="Reg_factor_effector_dom_sf"/>
</dbReference>
<dbReference type="InterPro" id="IPR006917">
    <property type="entry name" value="SOUL_haem-bd"/>
</dbReference>
<dbReference type="PANTHER" id="PTHR11220:SF22">
    <property type="entry name" value="HEME-BINDING PROTEIN 1"/>
    <property type="match status" value="1"/>
</dbReference>
<dbReference type="PANTHER" id="PTHR11220">
    <property type="entry name" value="HEME-BINDING PROTEIN-RELATED"/>
    <property type="match status" value="1"/>
</dbReference>
<dbReference type="Pfam" id="PF04832">
    <property type="entry name" value="SOUL"/>
    <property type="match status" value="1"/>
</dbReference>
<dbReference type="SUPFAM" id="SSF55136">
    <property type="entry name" value="Probable bacterial effector-binding domain"/>
    <property type="match status" value="1"/>
</dbReference>
<organism>
    <name type="scientific">Xenopus tropicalis</name>
    <name type="common">Western clawed frog</name>
    <name type="synonym">Silurana tropicalis</name>
    <dbReference type="NCBI Taxonomy" id="8364"/>
    <lineage>
        <taxon>Eukaryota</taxon>
        <taxon>Metazoa</taxon>
        <taxon>Chordata</taxon>
        <taxon>Craniata</taxon>
        <taxon>Vertebrata</taxon>
        <taxon>Euteleostomi</taxon>
        <taxon>Amphibia</taxon>
        <taxon>Batrachia</taxon>
        <taxon>Anura</taxon>
        <taxon>Pipoidea</taxon>
        <taxon>Pipidae</taxon>
        <taxon>Xenopodinae</taxon>
        <taxon>Xenopus</taxon>
        <taxon>Silurana</taxon>
    </lineage>
</organism>
<protein>
    <recommendedName>
        <fullName>Heme-binding protein 1</fullName>
    </recommendedName>
</protein>
<evidence type="ECO:0000250" key="1"/>
<evidence type="ECO:0000305" key="2"/>
<name>HEBP1_XENTR</name>
<sequence length="190" mass="21200">MFGMIKNSLFGGVENNEGKLVSKGEKDGVAFEEREYEGGKFVSTEVSGKPFDEASKEAVLRLLKYVGGSNQKYAGMGMTSPVVITSYPAENETLQPNVKVLLRIPSQYQADPPVPTDDTIHIEDRESVTFYSTQFGGYAKEADYVSHAAKLRSCLGPDISYHTDHYMCCGYDPPMKPYGRRNEVWFIKNN</sequence>
<comment type="function">
    <text evidence="1">May bind free porphyrinogens that may be present in the cell and thus facilitate removal of these potentially toxic compound. Binds with a high affinity to one molecule of heme or porphyrins. It binds metalloporphyrins, free porphyrins and N-methylprotoporphyrin with similar affinities (By similarity).</text>
</comment>
<comment type="subunit">
    <text evidence="1">Monomer.</text>
</comment>
<comment type="subcellular location">
    <subcellularLocation>
        <location evidence="1">Cytoplasm</location>
    </subcellularLocation>
</comment>
<comment type="domain">
    <text evidence="1">Forms a distorted beta-barrel structure, with two helices that are packed against the outer surface of the barrel. Porphyrins are expected to bind to a hydrophobic patch on the outer surface of the beta-barrel structure (By similarity).</text>
</comment>
<comment type="similarity">
    <text evidence="2">Belongs to the HEBP family.</text>
</comment>
<gene>
    <name type="primary">hebp1</name>
</gene>